<gene>
    <name type="primary">EXOC8</name>
</gene>
<protein>
    <recommendedName>
        <fullName>Exocyst complex component 8</fullName>
    </recommendedName>
</protein>
<feature type="chain" id="PRO_0000329045" description="Exocyst complex component 8">
    <location>
        <begin position="1"/>
        <end position="725"/>
    </location>
</feature>
<feature type="domain" description="PH" evidence="4">
    <location>
        <begin position="182"/>
        <end position="282"/>
    </location>
</feature>
<feature type="region of interest" description="Disordered" evidence="5">
    <location>
        <begin position="116"/>
        <end position="159"/>
    </location>
</feature>
<feature type="region of interest" description="Disordered" evidence="5">
    <location>
        <begin position="285"/>
        <end position="322"/>
    </location>
</feature>
<feature type="compositionally biased region" description="Gly residues" evidence="5">
    <location>
        <begin position="120"/>
        <end position="129"/>
    </location>
</feature>
<feature type="compositionally biased region" description="Acidic residues" evidence="5">
    <location>
        <begin position="312"/>
        <end position="322"/>
    </location>
</feature>
<feature type="modified residue" description="Phosphoserine" evidence="3">
    <location>
        <position position="19"/>
    </location>
</feature>
<dbReference type="EMBL" id="BC134458">
    <property type="protein sequence ID" value="AAI34459.1"/>
    <property type="molecule type" value="mRNA"/>
</dbReference>
<dbReference type="RefSeq" id="NP_001091581.1">
    <property type="nucleotide sequence ID" value="NM_001098112.2"/>
</dbReference>
<dbReference type="FunCoup" id="A4IF89">
    <property type="interactions" value="4605"/>
</dbReference>
<dbReference type="STRING" id="9913.ENSBTAP00000008028"/>
<dbReference type="PaxDb" id="9913-ENSBTAP00000008028"/>
<dbReference type="Ensembl" id="ENSBTAT00000008028.5">
    <property type="protein sequence ID" value="ENSBTAP00000008028.3"/>
    <property type="gene ID" value="ENSBTAG00000006111.5"/>
</dbReference>
<dbReference type="GeneID" id="540237"/>
<dbReference type="KEGG" id="bta:540237"/>
<dbReference type="CTD" id="149371"/>
<dbReference type="VEuPathDB" id="HostDB:ENSBTAG00000006111"/>
<dbReference type="VGNC" id="VGNC:28653">
    <property type="gene designation" value="EXOC8"/>
</dbReference>
<dbReference type="eggNOG" id="KOG2215">
    <property type="taxonomic scope" value="Eukaryota"/>
</dbReference>
<dbReference type="GeneTree" id="ENSGT00390000015936"/>
<dbReference type="HOGENOM" id="CLU_025760_0_0_1"/>
<dbReference type="InParanoid" id="A4IF89"/>
<dbReference type="OMA" id="AAWLPNR"/>
<dbReference type="OrthoDB" id="642193at2759"/>
<dbReference type="TreeFam" id="TF105819"/>
<dbReference type="Reactome" id="R-BTA-264876">
    <property type="pathway name" value="Insulin processing"/>
</dbReference>
<dbReference type="Reactome" id="R-BTA-5620916">
    <property type="pathway name" value="VxPx cargo-targeting to cilium"/>
</dbReference>
<dbReference type="Proteomes" id="UP000009136">
    <property type="component" value="Chromosome 28"/>
</dbReference>
<dbReference type="Bgee" id="ENSBTAG00000006111">
    <property type="expression patterns" value="Expressed in neutrophil and 107 other cell types or tissues"/>
</dbReference>
<dbReference type="GO" id="GO:0000145">
    <property type="term" value="C:exocyst"/>
    <property type="evidence" value="ECO:0000318"/>
    <property type="project" value="GO_Central"/>
</dbReference>
<dbReference type="GO" id="GO:0030426">
    <property type="term" value="C:growth cone"/>
    <property type="evidence" value="ECO:0007669"/>
    <property type="project" value="UniProtKB-SubCell"/>
</dbReference>
<dbReference type="GO" id="GO:0005770">
    <property type="term" value="C:late endosome"/>
    <property type="evidence" value="ECO:0007669"/>
    <property type="project" value="Ensembl"/>
</dbReference>
<dbReference type="GO" id="GO:0048471">
    <property type="term" value="C:perinuclear region of cytoplasm"/>
    <property type="evidence" value="ECO:0007669"/>
    <property type="project" value="UniProtKB-SubCell"/>
</dbReference>
<dbReference type="GO" id="GO:0035091">
    <property type="term" value="F:phosphatidylinositol binding"/>
    <property type="evidence" value="ECO:0007669"/>
    <property type="project" value="Ensembl"/>
</dbReference>
<dbReference type="GO" id="GO:0031267">
    <property type="term" value="F:small GTPase binding"/>
    <property type="evidence" value="ECO:0007669"/>
    <property type="project" value="Ensembl"/>
</dbReference>
<dbReference type="GO" id="GO:0007032">
    <property type="term" value="P:endosome organization"/>
    <property type="evidence" value="ECO:0007669"/>
    <property type="project" value="Ensembl"/>
</dbReference>
<dbReference type="GO" id="GO:0006887">
    <property type="term" value="P:exocytosis"/>
    <property type="evidence" value="ECO:0007669"/>
    <property type="project" value="UniProtKB-KW"/>
</dbReference>
<dbReference type="GO" id="GO:0022617">
    <property type="term" value="P:extracellular matrix disassembly"/>
    <property type="evidence" value="ECO:0007669"/>
    <property type="project" value="Ensembl"/>
</dbReference>
<dbReference type="GO" id="GO:0006893">
    <property type="term" value="P:Golgi to plasma membrane transport"/>
    <property type="evidence" value="ECO:0000318"/>
    <property type="project" value="GO_Central"/>
</dbReference>
<dbReference type="GO" id="GO:0008104">
    <property type="term" value="P:protein localization"/>
    <property type="evidence" value="ECO:0000318"/>
    <property type="project" value="GO_Central"/>
</dbReference>
<dbReference type="GO" id="GO:0015031">
    <property type="term" value="P:protein transport"/>
    <property type="evidence" value="ECO:0007669"/>
    <property type="project" value="UniProtKB-KW"/>
</dbReference>
<dbReference type="CDD" id="cd01226">
    <property type="entry name" value="PH_RalBD_exo84"/>
    <property type="match status" value="1"/>
</dbReference>
<dbReference type="FunFam" id="1.20.58.1220:FF:000002">
    <property type="entry name" value="Exocyst complex component 8"/>
    <property type="match status" value="1"/>
</dbReference>
<dbReference type="FunFam" id="2.30.29.30:FF:000180">
    <property type="entry name" value="Exocyst complex component 8"/>
    <property type="match status" value="1"/>
</dbReference>
<dbReference type="FunFam" id="1.20.58.1210:FF:000001">
    <property type="entry name" value="exocyst complex component 8"/>
    <property type="match status" value="1"/>
</dbReference>
<dbReference type="Gene3D" id="1.20.58.1220">
    <property type="entry name" value="Exo84p, C-terminal helical domain"/>
    <property type="match status" value="1"/>
</dbReference>
<dbReference type="Gene3D" id="1.20.58.1210">
    <property type="entry name" value="Exo84p, N-terminal helical domain"/>
    <property type="match status" value="1"/>
</dbReference>
<dbReference type="Gene3D" id="2.30.29.30">
    <property type="entry name" value="Pleckstrin-homology domain (PH domain)/Phosphotyrosine-binding domain (PTB)"/>
    <property type="match status" value="1"/>
</dbReference>
<dbReference type="InterPro" id="IPR016159">
    <property type="entry name" value="Cullin_repeat-like_dom_sf"/>
</dbReference>
<dbReference type="InterPro" id="IPR033961">
    <property type="entry name" value="Exo84"/>
</dbReference>
<dbReference type="InterPro" id="IPR032403">
    <property type="entry name" value="Exo84_C"/>
</dbReference>
<dbReference type="InterPro" id="IPR042561">
    <property type="entry name" value="Exo84_C_1"/>
</dbReference>
<dbReference type="InterPro" id="IPR042560">
    <property type="entry name" value="Exo84_C_2"/>
</dbReference>
<dbReference type="InterPro" id="IPR011993">
    <property type="entry name" value="PH-like_dom_sf"/>
</dbReference>
<dbReference type="InterPro" id="IPR001849">
    <property type="entry name" value="PH_domain"/>
</dbReference>
<dbReference type="PANTHER" id="PTHR21426">
    <property type="entry name" value="EXOCYST COMPLEX COMPONENT 8"/>
    <property type="match status" value="1"/>
</dbReference>
<dbReference type="PANTHER" id="PTHR21426:SF12">
    <property type="entry name" value="EXOCYST COMPLEX COMPONENT 8"/>
    <property type="match status" value="1"/>
</dbReference>
<dbReference type="Pfam" id="PF16528">
    <property type="entry name" value="Exo84_C"/>
    <property type="match status" value="1"/>
</dbReference>
<dbReference type="Pfam" id="PF08700">
    <property type="entry name" value="VPS51_Exo84_N"/>
    <property type="match status" value="1"/>
</dbReference>
<dbReference type="SMART" id="SM00233">
    <property type="entry name" value="PH"/>
    <property type="match status" value="1"/>
</dbReference>
<dbReference type="SUPFAM" id="SSF74788">
    <property type="entry name" value="Cullin repeat-like"/>
    <property type="match status" value="1"/>
</dbReference>
<dbReference type="SUPFAM" id="SSF50729">
    <property type="entry name" value="PH domain-like"/>
    <property type="match status" value="1"/>
</dbReference>
<dbReference type="PROSITE" id="PS50003">
    <property type="entry name" value="PH_DOMAIN"/>
    <property type="match status" value="1"/>
</dbReference>
<comment type="function">
    <text evidence="1">Component of the exocyst complex involved in the docking of exocytic vesicles with fusion sites on the plasma membrane.</text>
</comment>
<comment type="subunit">
    <text evidence="2 3">The exocyst complex is composed of EXOC1, EXOC2, EXOC3, EXOC4, EXOC5, EXOC6, EXOC7 and EXOC8 (By similarity). Interacts (via PH domain) with GTP-bound RALA and RALB (By similarity). Interacts with SH3BP1; required for the localization of both SH3BP1 and the exocyst to the leading edge of migrating cells (By similarity).</text>
</comment>
<comment type="subcellular location">
    <subcellularLocation>
        <location evidence="2">Cytoplasm</location>
    </subcellularLocation>
    <subcellularLocation>
        <location evidence="2">Cytoplasm</location>
        <location evidence="2">Perinuclear region</location>
    </subcellularLocation>
    <subcellularLocation>
        <location evidence="2">Cell projection</location>
        <location evidence="2">Growth cone</location>
    </subcellularLocation>
    <subcellularLocation>
        <location evidence="2">Cell projection</location>
    </subcellularLocation>
    <text evidence="1 2">Binds lipids with phosphatidylinositol 3,4,5-trisphosphate groups (By similarity). Perinuclear in undifferentiated PC12 cells. Redistributes to growing neurites and growth cones during NGF-induced neuronal differentiation (By similarity). Localizes at the leading edge of migrating cells (By similarity).</text>
</comment>
<comment type="similarity">
    <text evidence="6">Belongs to the EXO84 family.</text>
</comment>
<accession>A4IF89</accession>
<reference key="1">
    <citation type="submission" date="2007-03" db="EMBL/GenBank/DDBJ databases">
        <authorList>
            <consortium name="NIH - Mammalian Gene Collection (MGC) project"/>
        </authorList>
    </citation>
    <scope>NUCLEOTIDE SEQUENCE [LARGE SCALE MRNA]</scope>
    <source>
        <strain>Hereford</strain>
        <tissue>Heart ventricle</tissue>
    </source>
</reference>
<keyword id="KW-0966">Cell projection</keyword>
<keyword id="KW-0963">Cytoplasm</keyword>
<keyword id="KW-0268">Exocytosis</keyword>
<keyword id="KW-0597">Phosphoprotein</keyword>
<keyword id="KW-0653">Protein transport</keyword>
<keyword id="KW-1185">Reference proteome</keyword>
<keyword id="KW-0813">Transport</keyword>
<organism>
    <name type="scientific">Bos taurus</name>
    <name type="common">Bovine</name>
    <dbReference type="NCBI Taxonomy" id="9913"/>
    <lineage>
        <taxon>Eukaryota</taxon>
        <taxon>Metazoa</taxon>
        <taxon>Chordata</taxon>
        <taxon>Craniata</taxon>
        <taxon>Vertebrata</taxon>
        <taxon>Euteleostomi</taxon>
        <taxon>Mammalia</taxon>
        <taxon>Eutheria</taxon>
        <taxon>Laurasiatheria</taxon>
        <taxon>Artiodactyla</taxon>
        <taxon>Ruminantia</taxon>
        <taxon>Pecora</taxon>
        <taxon>Bovidae</taxon>
        <taxon>Bovinae</taxon>
        <taxon>Bos</taxon>
    </lineage>
</organism>
<sequence>MAMAMSDSGASRLRRQLESGGFEARLYVKQLSQQSDGDRDLQEHRQRIQALAEETAQNLKRNVYQNYRQFIETAREISYLESEMYQLSHLLTEQKSSLESIPLTLLPAAAAAGAAAASGGEEGGGGAGGRDQLRGQTGFFPSPGGASRDGSGPGEEGKQRTLTTLLEKVEGCRHLLETPGQYLVYNGDLVEYEADHMAQLQRVHGFLMNDCLLVATWLPQRRGMYRYNALYPLDGLAVVNVKDNPPMKDMFKLLMFPESRIFQAENAKIKREWLEVLEETKRALSEKRRREQEEAAAPRGPPQVTPKASNPFEDEDDDEPTVPEIEEEKVDLSMEWIQELPEDLDVCIAQRDFEGAVDLLDKLNHYLEDKPSPPPVKELRARVDERVRQLTEVLVFELSPDRSLRGGPKATRRAVSQLIRLGQCTKACELFLRNRAAAVHTAIRQLRIEGATLLYIHKLCHVFFTSLLETAREFETDFAGTDSGCYSAFVVWARSAMGMFVDAFSKQVFDSKESLSTAAECVRVAKEHCQQLGDIGLDLTFIVHALLVKDIQGALHSYKEIIIEATKHRNSEEMWRRMNLMTPEALGKLKEEMKSCGVSNFEQYTGDDCWVNLSYTVVAFTKQTMGFLEEALKLYFPELHMVLLESLVEIILVAVQHVDYSLRCEQDPEKKAFIRQNASFLYETVLPVVEKRFEEGVGKPAKQLQDLRNASRLIRVNPESTTSVV</sequence>
<name>EXOC8_BOVIN</name>
<proteinExistence type="evidence at transcript level"/>
<evidence type="ECO:0000250" key="1"/>
<evidence type="ECO:0000250" key="2">
    <source>
        <dbReference type="UniProtKB" id="O54924"/>
    </source>
</evidence>
<evidence type="ECO:0000250" key="3">
    <source>
        <dbReference type="UniProtKB" id="Q8IYI6"/>
    </source>
</evidence>
<evidence type="ECO:0000255" key="4">
    <source>
        <dbReference type="PROSITE-ProRule" id="PRU00145"/>
    </source>
</evidence>
<evidence type="ECO:0000256" key="5">
    <source>
        <dbReference type="SAM" id="MobiDB-lite"/>
    </source>
</evidence>
<evidence type="ECO:0000305" key="6"/>